<name>ECS1_ARTAN</name>
<reference key="1">
    <citation type="journal article" date="1999" name="Arch. Biochem. Biophys.">
        <title>The molecular cloning of 8-epicedrol synthase from Artemisia annua.</title>
        <authorList>
            <person name="Hua L."/>
            <person name="Matsuda S.P."/>
        </authorList>
    </citation>
    <scope>NUCLEOTIDE SEQUENCE [MRNA]</scope>
    <scope>FUNCTION</scope>
</reference>
<reference key="2">
    <citation type="journal article" date="1999" name="Arch. Biochem. Biophys.">
        <title>Cloning, expression, and characterization of epi-cedrol synthase, a sesquiterpene cyclase from Artemisia annua L.</title>
        <authorList>
            <person name="Mercke P."/>
            <person name="Xue Z.T."/>
            <person name="Brodelius P.E."/>
        </authorList>
    </citation>
    <scope>NUCLEOTIDE SEQUENCE [MRNA]</scope>
    <scope>BIOPHYSICOCHEMICAL PROPERTIES</scope>
    <source>
        <tissue>Leaf</tissue>
    </source>
</reference>
<reference key="3">
    <citation type="journal article" date="2000" name="Plant Sci.">
        <title>Cloning and molecular analysis of two new sesquiterpene cyclases from Artemisia annua L.</title>
        <authorList>
            <person name="Van Geldre E."/>
            <person name="De Pauw I."/>
            <person name="Inze D."/>
            <person name="Van Montagu M."/>
            <person name="Van den Eeckhout E."/>
        </authorList>
    </citation>
    <scope>NUCLEOTIDE SEQUENCE [MRNA]</scope>
    <scope>TISSUE SPECIFICITY</scope>
</reference>
<proteinExistence type="evidence at protein level"/>
<sequence length="547" mass="63564">MSLIVEDVIRPNANFPSEIWGDQFLAYDQDEQEGVEQVIKDLKEEVKSELLTALNSPTQHTELLKFIDAIERLGIAYYFEEEINQVFQHMYTAYGDKWTGGNTSLWFRLMRQHGFFVSSDIFSTYKDKEGRFKESLEKDVHGLLELYEAAYMFVPGEGILDDALVFTRTCLDEIAKNPSLSNSAVSSQIREALTQPLHKRLPRLEALRYIPFYQQQASHSETLLKLAKLGFNQLQSLHKKELSIISKWWKSFDVANNLPYARNRPVECYFWALAVYFEPQYSESRVFLSRFFSIQTFLDDTYDAYGTYEELEQFTEAIQRWSITCLDGLPESMKLIFQMLVKIFEEIEEILSKDGKQHHVNYIKETLKEAVQSYMTEARWAKEEYIPTIEEHTKVSYISIGYKLALVAGFACMGDVIADDSFEWVFTNPPLVNACCLLCRTMDDLGSHKGEQDRKHVASTIECYMKQFDASEQQAYESLNKKVEDAWKEINREFMITCKDVNIHVAMRVLNFSRSVDVLYKNKDHFTHVGVEVINHIKSLFVDAIIT</sequence>
<feature type="chain" id="PRO_0000380670" description="Epi-cedrol synthase">
    <location>
        <begin position="1"/>
        <end position="547"/>
    </location>
</feature>
<feature type="short sequence motif" description="DDXXD motif">
    <location>
        <begin position="299"/>
        <end position="303"/>
    </location>
</feature>
<feature type="binding site" evidence="1">
    <location>
        <position position="299"/>
    </location>
    <ligand>
        <name>Mg(2+)</name>
        <dbReference type="ChEBI" id="CHEBI:18420"/>
        <label>1</label>
    </ligand>
</feature>
<feature type="binding site" evidence="1">
    <location>
        <position position="299"/>
    </location>
    <ligand>
        <name>Mg(2+)</name>
        <dbReference type="ChEBI" id="CHEBI:18420"/>
        <label>2</label>
    </ligand>
</feature>
<feature type="binding site" evidence="1">
    <location>
        <position position="303"/>
    </location>
    <ligand>
        <name>Mg(2+)</name>
        <dbReference type="ChEBI" id="CHEBI:18420"/>
        <label>1</label>
    </ligand>
</feature>
<feature type="binding site" evidence="1">
    <location>
        <position position="303"/>
    </location>
    <ligand>
        <name>Mg(2+)</name>
        <dbReference type="ChEBI" id="CHEBI:18420"/>
        <label>2</label>
    </ligand>
</feature>
<feature type="binding site" evidence="1">
    <location>
        <position position="443"/>
    </location>
    <ligand>
        <name>Mg(2+)</name>
        <dbReference type="ChEBI" id="CHEBI:18420"/>
        <label>3</label>
    </ligand>
</feature>
<feature type="binding site" evidence="1">
    <location>
        <position position="447"/>
    </location>
    <ligand>
        <name>Mg(2+)</name>
        <dbReference type="ChEBI" id="CHEBI:18420"/>
        <label>3</label>
    </ligand>
</feature>
<feature type="binding site" evidence="1">
    <location>
        <position position="451"/>
    </location>
    <ligand>
        <name>Mg(2+)</name>
        <dbReference type="ChEBI" id="CHEBI:18420"/>
        <label>3</label>
    </ligand>
</feature>
<feature type="sequence conflict" description="In Ref. 3; CAB56499." evidence="5" ref="3">
    <original>V</original>
    <variation>I</variation>
    <location>
        <position position="185"/>
    </location>
</feature>
<evidence type="ECO:0000250" key="1"/>
<evidence type="ECO:0000269" key="2">
    <source>
    </source>
</evidence>
<evidence type="ECO:0000269" key="3">
    <source>
    </source>
</evidence>
<evidence type="ECO:0000269" key="4">
    <source>
    </source>
</evidence>
<evidence type="ECO:0000305" key="5"/>
<accession>Q9LLR9</accession>
<accession>Q9ST45</accession>
<dbReference type="EC" id="4.2.3.39"/>
<dbReference type="EMBL" id="AF157059">
    <property type="protein sequence ID" value="AAF80333.1"/>
    <property type="molecule type" value="mRNA"/>
</dbReference>
<dbReference type="EMBL" id="AJ001539">
    <property type="protein sequence ID" value="CAC08805.1"/>
    <property type="molecule type" value="mRNA"/>
</dbReference>
<dbReference type="EMBL" id="AJ249561">
    <property type="protein sequence ID" value="CAB56499.1"/>
    <property type="molecule type" value="mRNA"/>
</dbReference>
<dbReference type="SMR" id="Q9LLR9"/>
<dbReference type="KEGG" id="ag:AAF80333"/>
<dbReference type="BioCyc" id="MetaCyc:MONOMER-16025"/>
<dbReference type="BRENDA" id="4.2.3.39">
    <property type="organism ID" value="7150"/>
</dbReference>
<dbReference type="UniPathway" id="UPA00213"/>
<dbReference type="GO" id="GO:0052682">
    <property type="term" value="F:epi-cedrol synthase activity"/>
    <property type="evidence" value="ECO:0007669"/>
    <property type="project" value="UniProtKB-EC"/>
</dbReference>
<dbReference type="GO" id="GO:0000287">
    <property type="term" value="F:magnesium ion binding"/>
    <property type="evidence" value="ECO:0007669"/>
    <property type="project" value="InterPro"/>
</dbReference>
<dbReference type="GO" id="GO:0010333">
    <property type="term" value="F:terpene synthase activity"/>
    <property type="evidence" value="ECO:0007669"/>
    <property type="project" value="InterPro"/>
</dbReference>
<dbReference type="GO" id="GO:0016102">
    <property type="term" value="P:diterpenoid biosynthetic process"/>
    <property type="evidence" value="ECO:0007669"/>
    <property type="project" value="InterPro"/>
</dbReference>
<dbReference type="CDD" id="cd00684">
    <property type="entry name" value="Terpene_cyclase_plant_C1"/>
    <property type="match status" value="1"/>
</dbReference>
<dbReference type="FunFam" id="1.10.600.10:FF:000007">
    <property type="entry name" value="Isoprene synthase, chloroplastic"/>
    <property type="match status" value="1"/>
</dbReference>
<dbReference type="FunFam" id="1.50.10.130:FF:000001">
    <property type="entry name" value="Isoprene synthase, chloroplastic"/>
    <property type="match status" value="1"/>
</dbReference>
<dbReference type="Gene3D" id="1.10.600.10">
    <property type="entry name" value="Farnesyl Diphosphate Synthase"/>
    <property type="match status" value="1"/>
</dbReference>
<dbReference type="Gene3D" id="1.50.10.130">
    <property type="entry name" value="Terpene synthase, N-terminal domain"/>
    <property type="match status" value="1"/>
</dbReference>
<dbReference type="InterPro" id="IPR008949">
    <property type="entry name" value="Isoprenoid_synthase_dom_sf"/>
</dbReference>
<dbReference type="InterPro" id="IPR034741">
    <property type="entry name" value="Terpene_cyclase-like_1_C"/>
</dbReference>
<dbReference type="InterPro" id="IPR044814">
    <property type="entry name" value="Terpene_cyclase_plant_C1"/>
</dbReference>
<dbReference type="InterPro" id="IPR001906">
    <property type="entry name" value="Terpene_synth_N"/>
</dbReference>
<dbReference type="InterPro" id="IPR036965">
    <property type="entry name" value="Terpene_synth_N_sf"/>
</dbReference>
<dbReference type="InterPro" id="IPR050148">
    <property type="entry name" value="Terpene_synthase-like"/>
</dbReference>
<dbReference type="InterPro" id="IPR005630">
    <property type="entry name" value="Terpene_synthase_metal-bd"/>
</dbReference>
<dbReference type="InterPro" id="IPR008930">
    <property type="entry name" value="Terpenoid_cyclase/PrenylTrfase"/>
</dbReference>
<dbReference type="PANTHER" id="PTHR31225">
    <property type="entry name" value="OS04G0344100 PROTEIN-RELATED"/>
    <property type="match status" value="1"/>
</dbReference>
<dbReference type="PANTHER" id="PTHR31225:SF235">
    <property type="entry name" value="TERPENOID CYCLASES_PROTEIN PRENYLTRANSFERASE ALPHA-ALPHA TOROID-RELATED"/>
    <property type="match status" value="1"/>
</dbReference>
<dbReference type="Pfam" id="PF01397">
    <property type="entry name" value="Terpene_synth"/>
    <property type="match status" value="1"/>
</dbReference>
<dbReference type="Pfam" id="PF03936">
    <property type="entry name" value="Terpene_synth_C"/>
    <property type="match status" value="1"/>
</dbReference>
<dbReference type="SFLD" id="SFLDS00005">
    <property type="entry name" value="Isoprenoid_Synthase_Type_I"/>
    <property type="match status" value="1"/>
</dbReference>
<dbReference type="SFLD" id="SFLDG01019">
    <property type="entry name" value="Terpene_Cyclase_Like_1_C_Termi"/>
    <property type="match status" value="1"/>
</dbReference>
<dbReference type="SUPFAM" id="SSF48239">
    <property type="entry name" value="Terpenoid cyclases/Protein prenyltransferases"/>
    <property type="match status" value="1"/>
</dbReference>
<dbReference type="SUPFAM" id="SSF48576">
    <property type="entry name" value="Terpenoid synthases"/>
    <property type="match status" value="1"/>
</dbReference>
<organism>
    <name type="scientific">Artemisia annua</name>
    <name type="common">Sweet wormwood</name>
    <dbReference type="NCBI Taxonomy" id="35608"/>
    <lineage>
        <taxon>Eukaryota</taxon>
        <taxon>Viridiplantae</taxon>
        <taxon>Streptophyta</taxon>
        <taxon>Embryophyta</taxon>
        <taxon>Tracheophyta</taxon>
        <taxon>Spermatophyta</taxon>
        <taxon>Magnoliopsida</taxon>
        <taxon>eudicotyledons</taxon>
        <taxon>Gunneridae</taxon>
        <taxon>Pentapetalae</taxon>
        <taxon>asterids</taxon>
        <taxon>campanulids</taxon>
        <taxon>Asterales</taxon>
        <taxon>Asteraceae</taxon>
        <taxon>Asteroideae</taxon>
        <taxon>Anthemideae</taxon>
        <taxon>Artemisiinae</taxon>
        <taxon>Artemisia</taxon>
    </lineage>
</organism>
<keyword id="KW-0456">Lyase</keyword>
<keyword id="KW-0460">Magnesium</keyword>
<keyword id="KW-0464">Manganese</keyword>
<keyword id="KW-0479">Metal-binding</keyword>
<gene>
    <name type="primary">ECS1</name>
</gene>
<comment type="function">
    <text evidence="2">Sesquiterpene cyclase catalyzing the production of 8-epi-cedrol. Able to convert geranyl diphosphate to monoterpens. Can use farnesyl diphosphate or geranyl diphosphate as substrates, but not geranylgeranyl diphosphate. Probably not involved in artemisinin biosynthesis.</text>
</comment>
<comment type="catalytic activity">
    <reaction>
        <text>(2E,6E)-farnesyl diphosphate + H2O = epi-cedrol + diphosphate</text>
        <dbReference type="Rhea" id="RHEA:26115"/>
        <dbReference type="ChEBI" id="CHEBI:15377"/>
        <dbReference type="ChEBI" id="CHEBI:33019"/>
        <dbReference type="ChEBI" id="CHEBI:52226"/>
        <dbReference type="ChEBI" id="CHEBI:175763"/>
        <dbReference type="EC" id="4.2.3.39"/>
    </reaction>
</comment>
<comment type="cofactor">
    <cofactor evidence="1">
        <name>Mg(2+)</name>
        <dbReference type="ChEBI" id="CHEBI:18420"/>
    </cofactor>
    <cofactor evidence="1">
        <name>Mn(2+)</name>
        <dbReference type="ChEBI" id="CHEBI:29035"/>
    </cofactor>
    <text evidence="1">Binds 3 Mg(2+) or Mn(2+) ions per subunit.</text>
</comment>
<comment type="activity regulation">
    <text>Inhibited by high concentration of manganese.</text>
</comment>
<comment type="biophysicochemical properties">
    <kinetics>
        <KM evidence="3">0.4 uM for farnesyl diphosphate (at pH 7.0)</KM>
        <KM evidence="3">1.3 uM for farnesyl diphosphate (at pH 9.0)</KM>
        <KM evidence="3">80 uM for magnesium (at pH 7.0)</KM>
        <KM evidence="3">80 uM for magnesium (at pH 9.0)</KM>
    </kinetics>
    <phDependence>
        <text evidence="3">Optimum pH is 8.5-9.0.</text>
    </phDependence>
</comment>
<comment type="pathway">
    <text>Secondary metabolite biosynthesis; terpenoid biosynthesis.</text>
</comment>
<comment type="tissue specificity">
    <text evidence="4">Constitutively expressed in leaves and flowers.</text>
</comment>
<comment type="domain">
    <text>The Asp-Asp-Xaa-Xaa-Asp/Glu (DDXXD/E) motif is important for the catalytic activity, presumably through binding to Mg(2+).</text>
</comment>
<comment type="similarity">
    <text evidence="5">Belongs to the terpene synthase family.</text>
</comment>
<protein>
    <recommendedName>
        <fullName>Epi-cedrol synthase</fullName>
        <ecNumber>4.2.3.39</ecNumber>
    </recommendedName>
    <alternativeName>
        <fullName>8-epicedrol synthase</fullName>
    </alternativeName>
</protein>